<dbReference type="EMBL" id="FM178379">
    <property type="protein sequence ID" value="CAQ78298.1"/>
    <property type="molecule type" value="Genomic_DNA"/>
</dbReference>
<dbReference type="RefSeq" id="WP_012549421.1">
    <property type="nucleotide sequence ID" value="NC_011312.1"/>
</dbReference>
<dbReference type="SMR" id="B6ENF7"/>
<dbReference type="KEGG" id="vsa:VSAL_I0613"/>
<dbReference type="eggNOG" id="COG4108">
    <property type="taxonomic scope" value="Bacteria"/>
</dbReference>
<dbReference type="HOGENOM" id="CLU_002794_2_1_6"/>
<dbReference type="Proteomes" id="UP000001730">
    <property type="component" value="Chromosome 1"/>
</dbReference>
<dbReference type="GO" id="GO:0005829">
    <property type="term" value="C:cytosol"/>
    <property type="evidence" value="ECO:0007669"/>
    <property type="project" value="TreeGrafter"/>
</dbReference>
<dbReference type="GO" id="GO:0005525">
    <property type="term" value="F:GTP binding"/>
    <property type="evidence" value="ECO:0007669"/>
    <property type="project" value="UniProtKB-UniRule"/>
</dbReference>
<dbReference type="GO" id="GO:0003924">
    <property type="term" value="F:GTPase activity"/>
    <property type="evidence" value="ECO:0007669"/>
    <property type="project" value="InterPro"/>
</dbReference>
<dbReference type="GO" id="GO:0097216">
    <property type="term" value="F:guanosine tetraphosphate binding"/>
    <property type="evidence" value="ECO:0007669"/>
    <property type="project" value="UniProtKB-ARBA"/>
</dbReference>
<dbReference type="GO" id="GO:0016150">
    <property type="term" value="F:translation release factor activity, codon nonspecific"/>
    <property type="evidence" value="ECO:0007669"/>
    <property type="project" value="TreeGrafter"/>
</dbReference>
<dbReference type="GO" id="GO:0016149">
    <property type="term" value="F:translation release factor activity, codon specific"/>
    <property type="evidence" value="ECO:0007669"/>
    <property type="project" value="UniProtKB-UniRule"/>
</dbReference>
<dbReference type="GO" id="GO:0006449">
    <property type="term" value="P:regulation of translational termination"/>
    <property type="evidence" value="ECO:0007669"/>
    <property type="project" value="UniProtKB-UniRule"/>
</dbReference>
<dbReference type="CDD" id="cd04169">
    <property type="entry name" value="RF3"/>
    <property type="match status" value="1"/>
</dbReference>
<dbReference type="CDD" id="cd03689">
    <property type="entry name" value="RF3_II"/>
    <property type="match status" value="1"/>
</dbReference>
<dbReference type="CDD" id="cd16259">
    <property type="entry name" value="RF3_III"/>
    <property type="match status" value="1"/>
</dbReference>
<dbReference type="FunFam" id="2.40.30.10:FF:000040">
    <property type="entry name" value="Peptide chain release factor 3"/>
    <property type="match status" value="1"/>
</dbReference>
<dbReference type="FunFam" id="3.30.70.3280:FF:000001">
    <property type="entry name" value="Peptide chain release factor 3"/>
    <property type="match status" value="1"/>
</dbReference>
<dbReference type="FunFam" id="3.40.50.300:FF:000542">
    <property type="entry name" value="Peptide chain release factor 3"/>
    <property type="match status" value="1"/>
</dbReference>
<dbReference type="Gene3D" id="3.40.50.300">
    <property type="entry name" value="P-loop containing nucleotide triphosphate hydrolases"/>
    <property type="match status" value="2"/>
</dbReference>
<dbReference type="Gene3D" id="3.30.70.3280">
    <property type="entry name" value="Peptide chain release factor 3, domain III"/>
    <property type="match status" value="1"/>
</dbReference>
<dbReference type="HAMAP" id="MF_00072">
    <property type="entry name" value="Rel_fac_3"/>
    <property type="match status" value="1"/>
</dbReference>
<dbReference type="InterPro" id="IPR053905">
    <property type="entry name" value="EF-G-like_DII"/>
</dbReference>
<dbReference type="InterPro" id="IPR035647">
    <property type="entry name" value="EFG_III/V"/>
</dbReference>
<dbReference type="InterPro" id="IPR031157">
    <property type="entry name" value="G_TR_CS"/>
</dbReference>
<dbReference type="InterPro" id="IPR027417">
    <property type="entry name" value="P-loop_NTPase"/>
</dbReference>
<dbReference type="InterPro" id="IPR004548">
    <property type="entry name" value="PrfC"/>
</dbReference>
<dbReference type="InterPro" id="IPR032090">
    <property type="entry name" value="RF3_C"/>
</dbReference>
<dbReference type="InterPro" id="IPR038467">
    <property type="entry name" value="RF3_dom_3_sf"/>
</dbReference>
<dbReference type="InterPro" id="IPR041732">
    <property type="entry name" value="RF3_GTP-bd"/>
</dbReference>
<dbReference type="InterPro" id="IPR005225">
    <property type="entry name" value="Small_GTP-bd"/>
</dbReference>
<dbReference type="InterPro" id="IPR000795">
    <property type="entry name" value="T_Tr_GTP-bd_dom"/>
</dbReference>
<dbReference type="InterPro" id="IPR009000">
    <property type="entry name" value="Transl_B-barrel_sf"/>
</dbReference>
<dbReference type="NCBIfam" id="TIGR00503">
    <property type="entry name" value="prfC"/>
    <property type="match status" value="1"/>
</dbReference>
<dbReference type="NCBIfam" id="NF001964">
    <property type="entry name" value="PRK00741.1"/>
    <property type="match status" value="1"/>
</dbReference>
<dbReference type="NCBIfam" id="TIGR00231">
    <property type="entry name" value="small_GTP"/>
    <property type="match status" value="1"/>
</dbReference>
<dbReference type="PANTHER" id="PTHR43556">
    <property type="entry name" value="PEPTIDE CHAIN RELEASE FACTOR RF3"/>
    <property type="match status" value="1"/>
</dbReference>
<dbReference type="PANTHER" id="PTHR43556:SF2">
    <property type="entry name" value="PEPTIDE CHAIN RELEASE FACTOR RF3"/>
    <property type="match status" value="1"/>
</dbReference>
<dbReference type="Pfam" id="PF22042">
    <property type="entry name" value="EF-G_D2"/>
    <property type="match status" value="1"/>
</dbReference>
<dbReference type="Pfam" id="PF00009">
    <property type="entry name" value="GTP_EFTU"/>
    <property type="match status" value="1"/>
</dbReference>
<dbReference type="Pfam" id="PF16658">
    <property type="entry name" value="RF3_C"/>
    <property type="match status" value="1"/>
</dbReference>
<dbReference type="PRINTS" id="PR00315">
    <property type="entry name" value="ELONGATNFCT"/>
</dbReference>
<dbReference type="SUPFAM" id="SSF54980">
    <property type="entry name" value="EF-G C-terminal domain-like"/>
    <property type="match status" value="1"/>
</dbReference>
<dbReference type="SUPFAM" id="SSF52540">
    <property type="entry name" value="P-loop containing nucleoside triphosphate hydrolases"/>
    <property type="match status" value="1"/>
</dbReference>
<dbReference type="SUPFAM" id="SSF50447">
    <property type="entry name" value="Translation proteins"/>
    <property type="match status" value="1"/>
</dbReference>
<dbReference type="PROSITE" id="PS00301">
    <property type="entry name" value="G_TR_1"/>
    <property type="match status" value="1"/>
</dbReference>
<dbReference type="PROSITE" id="PS51722">
    <property type="entry name" value="G_TR_2"/>
    <property type="match status" value="1"/>
</dbReference>
<evidence type="ECO:0000255" key="1">
    <source>
        <dbReference type="HAMAP-Rule" id="MF_00072"/>
    </source>
</evidence>
<name>RF3_ALISL</name>
<feature type="chain" id="PRO_1000092472" description="Peptide chain release factor 3">
    <location>
        <begin position="1"/>
        <end position="526"/>
    </location>
</feature>
<feature type="domain" description="tr-type G">
    <location>
        <begin position="8"/>
        <end position="277"/>
    </location>
</feature>
<feature type="binding site" evidence="1">
    <location>
        <begin position="17"/>
        <end position="24"/>
    </location>
    <ligand>
        <name>GTP</name>
        <dbReference type="ChEBI" id="CHEBI:37565"/>
    </ligand>
</feature>
<feature type="binding site" evidence="1">
    <location>
        <begin position="85"/>
        <end position="89"/>
    </location>
    <ligand>
        <name>GTP</name>
        <dbReference type="ChEBI" id="CHEBI:37565"/>
    </ligand>
</feature>
<feature type="binding site" evidence="1">
    <location>
        <begin position="139"/>
        <end position="142"/>
    </location>
    <ligand>
        <name>GTP</name>
        <dbReference type="ChEBI" id="CHEBI:37565"/>
    </ligand>
</feature>
<accession>B6ENF7</accession>
<proteinExistence type="inferred from homology"/>
<organism>
    <name type="scientific">Aliivibrio salmonicida (strain LFI1238)</name>
    <name type="common">Vibrio salmonicida (strain LFI1238)</name>
    <dbReference type="NCBI Taxonomy" id="316275"/>
    <lineage>
        <taxon>Bacteria</taxon>
        <taxon>Pseudomonadati</taxon>
        <taxon>Pseudomonadota</taxon>
        <taxon>Gammaproteobacteria</taxon>
        <taxon>Vibrionales</taxon>
        <taxon>Vibrionaceae</taxon>
        <taxon>Aliivibrio</taxon>
    </lineage>
</organism>
<reference key="1">
    <citation type="journal article" date="2008" name="BMC Genomics">
        <title>The genome sequence of the fish pathogen Aliivibrio salmonicida strain LFI1238 shows extensive evidence of gene decay.</title>
        <authorList>
            <person name="Hjerde E."/>
            <person name="Lorentzen M.S."/>
            <person name="Holden M.T."/>
            <person name="Seeger K."/>
            <person name="Paulsen S."/>
            <person name="Bason N."/>
            <person name="Churcher C."/>
            <person name="Harris D."/>
            <person name="Norbertczak H."/>
            <person name="Quail M.A."/>
            <person name="Sanders S."/>
            <person name="Thurston S."/>
            <person name="Parkhill J."/>
            <person name="Willassen N.P."/>
            <person name="Thomson N.R."/>
        </authorList>
    </citation>
    <scope>NUCLEOTIDE SEQUENCE [LARGE SCALE GENOMIC DNA]</scope>
    <source>
        <strain>LFI1238</strain>
    </source>
</reference>
<sequence length="526" mass="58854">MSFLQEVGKRRTFAIISHPDAGKTTITEKVLLFGNAIQKAGTVKGRGSNQHAKSDWMEMEKERGISVTTSVMQFPFNGCLVNLLDTPGHEDFSEDTYRTLTAVDSCLMVIDAAKGVEDRTRKLMEVTRLRDTPIVTFMNKMDREVRDPMEVLDEVESELGMACAPISWPIGCGKEFKGVYHIHRDETILYQSGHGHEIQEVRTIKGLDNPELDVAIGNELALSVREELELVIGAAHEFDLELFLKGELTPVYFGTALGNFGVDHMLEGLTEWAPAPQTREATERPVEATEEKFSGFVFKIQANMDPKHRDRIAFMRIVSGTYTQGMKMNHVRTGKNISISDAVTFMAGDRARAEVAYAGDIIGLHNHGTIQIGDTFTQGENLKFSGIPNFAPELFRRIRLRDPLKQKQLLKGLVQLSEEGAVQVFRPLQNNDLIVGAVGVLQFDVVVSRLKSEYNVEAIYEGISVATARWVECSDGKMQDEFQRKNQTNLALDGGNNLTYIAPTMVNLNLAIERFPDVQFRATREH</sequence>
<protein>
    <recommendedName>
        <fullName evidence="1">Peptide chain release factor 3</fullName>
        <shortName evidence="1">RF-3</shortName>
    </recommendedName>
</protein>
<gene>
    <name evidence="1" type="primary">prfC</name>
    <name type="ordered locus">VSAL_I0613</name>
</gene>
<comment type="function">
    <text evidence="1">Increases the formation of ribosomal termination complexes and stimulates activities of RF-1 and RF-2. It binds guanine nucleotides and has strong preference for UGA stop codons. It may interact directly with the ribosome. The stimulation of RF-1 and RF-2 is significantly reduced by GTP and GDP, but not by GMP.</text>
</comment>
<comment type="subcellular location">
    <subcellularLocation>
        <location evidence="1">Cytoplasm</location>
    </subcellularLocation>
</comment>
<comment type="similarity">
    <text evidence="1">Belongs to the TRAFAC class translation factor GTPase superfamily. Classic translation factor GTPase family. PrfC subfamily.</text>
</comment>
<keyword id="KW-0963">Cytoplasm</keyword>
<keyword id="KW-0342">GTP-binding</keyword>
<keyword id="KW-0547">Nucleotide-binding</keyword>
<keyword id="KW-0648">Protein biosynthesis</keyword>